<sequence>MLVKTLYYRLVEGTFAKAMLVLDEKGTLYYASLGEDSNALRETLVTDFASKQRQFQLKPMVTLSNHERADYTALCFLKLMEEEEDWKNEGEESLQQKGAKRIPIEFIFGTELQRKVWQQLLEIPVGEVRYYGNIVEALGLPKSASRAVGNACGANKIALVVPCHRVIAQTGKLTGYRWGLATKKQILKMELGDAYTTLVSE</sequence>
<proteinExistence type="inferred from homology"/>
<comment type="function">
    <text evidence="1">Involved in the cellular defense against the biological effects of O6-methylguanine (O6-MeG) and O4-methylthymine (O4-MeT) in DNA. Repairs the methylated nucleobase in DNA by stoichiometrically transferring the methyl group to a cysteine residue in the enzyme. This is a suicide reaction: the enzyme is irreversibly inactivated.</text>
</comment>
<comment type="catalytic activity">
    <reaction evidence="2">
        <text>a 6-O-methyl-2'-deoxyguanosine in DNA + L-cysteinyl-[protein] = S-methyl-L-cysteinyl-[protein] + a 2'-deoxyguanosine in DNA</text>
        <dbReference type="Rhea" id="RHEA:24000"/>
        <dbReference type="Rhea" id="RHEA-COMP:10131"/>
        <dbReference type="Rhea" id="RHEA-COMP:10132"/>
        <dbReference type="Rhea" id="RHEA-COMP:11367"/>
        <dbReference type="Rhea" id="RHEA-COMP:11368"/>
        <dbReference type="ChEBI" id="CHEBI:29950"/>
        <dbReference type="ChEBI" id="CHEBI:82612"/>
        <dbReference type="ChEBI" id="CHEBI:85445"/>
        <dbReference type="ChEBI" id="CHEBI:85448"/>
        <dbReference type="EC" id="2.1.1.63"/>
    </reaction>
</comment>
<comment type="catalytic activity">
    <reaction evidence="2">
        <text>a 4-O-methyl-thymidine in DNA + L-cysteinyl-[protein] = a thymidine in DNA + S-methyl-L-cysteinyl-[protein]</text>
        <dbReference type="Rhea" id="RHEA:53428"/>
        <dbReference type="Rhea" id="RHEA-COMP:10131"/>
        <dbReference type="Rhea" id="RHEA-COMP:10132"/>
        <dbReference type="Rhea" id="RHEA-COMP:13555"/>
        <dbReference type="Rhea" id="RHEA-COMP:13556"/>
        <dbReference type="ChEBI" id="CHEBI:29950"/>
        <dbReference type="ChEBI" id="CHEBI:82612"/>
        <dbReference type="ChEBI" id="CHEBI:137386"/>
        <dbReference type="ChEBI" id="CHEBI:137387"/>
        <dbReference type="EC" id="2.1.1.63"/>
    </reaction>
</comment>
<comment type="subcellular location">
    <subcellularLocation>
        <location evidence="1">Nucleus</location>
    </subcellularLocation>
</comment>
<comment type="miscellaneous">
    <text>This enzyme catalyzes only one turnover and therefore is not strictly catalytic. According to one definition, an enzyme is a biocatalyst that acts repeatedly and over many reaction cycles.</text>
</comment>
<comment type="similarity">
    <text evidence="3">Belongs to the MGMT family.</text>
</comment>
<protein>
    <recommendedName>
        <fullName>Methylated-DNA--protein-cysteine methyltransferase</fullName>
        <ecNumber>2.1.1.63</ecNumber>
    </recommendedName>
    <alternativeName>
        <fullName>6-O-methylguanine-DNA methyltransferase</fullName>
        <shortName>MGMT</shortName>
    </alternativeName>
    <alternativeName>
        <fullName>DNA repair MTase</fullName>
    </alternativeName>
    <alternativeName>
        <fullName>O-6-methylguanine-DNA-alkyltransferase</fullName>
    </alternativeName>
</protein>
<dbReference type="EC" id="2.1.1.63"/>
<dbReference type="EMBL" id="CH981534">
    <property type="protein sequence ID" value="EDK47436.1"/>
    <property type="molecule type" value="Genomic_DNA"/>
</dbReference>
<dbReference type="RefSeq" id="XP_001523071.1">
    <property type="nucleotide sequence ID" value="XM_001523021.1"/>
</dbReference>
<dbReference type="SMR" id="A5E7M8"/>
<dbReference type="FunCoup" id="A5E7M8">
    <property type="interactions" value="47"/>
</dbReference>
<dbReference type="STRING" id="379508.A5E7M8"/>
<dbReference type="GeneID" id="5230165"/>
<dbReference type="KEGG" id="lel:PVL30_004374"/>
<dbReference type="VEuPathDB" id="FungiDB:LELG_05617"/>
<dbReference type="eggNOG" id="KOG4062">
    <property type="taxonomic scope" value="Eukaryota"/>
</dbReference>
<dbReference type="HOGENOM" id="CLU_000445_52_2_1"/>
<dbReference type="InParanoid" id="A5E7M8"/>
<dbReference type="OMA" id="YTFIETE"/>
<dbReference type="OrthoDB" id="1907495at2759"/>
<dbReference type="Proteomes" id="UP000001996">
    <property type="component" value="Unassembled WGS sequence"/>
</dbReference>
<dbReference type="GO" id="GO:0005634">
    <property type="term" value="C:nucleus"/>
    <property type="evidence" value="ECO:0007669"/>
    <property type="project" value="UniProtKB-SubCell"/>
</dbReference>
<dbReference type="GO" id="GO:0003677">
    <property type="term" value="F:DNA binding"/>
    <property type="evidence" value="ECO:0007669"/>
    <property type="project" value="UniProtKB-KW"/>
</dbReference>
<dbReference type="GO" id="GO:0003908">
    <property type="term" value="F:methylated-DNA-[protein]-cysteine S-methyltransferase activity"/>
    <property type="evidence" value="ECO:0007669"/>
    <property type="project" value="UniProtKB-EC"/>
</dbReference>
<dbReference type="GO" id="GO:0006307">
    <property type="term" value="P:DNA alkylation repair"/>
    <property type="evidence" value="ECO:0007669"/>
    <property type="project" value="EnsemblFungi"/>
</dbReference>
<dbReference type="GO" id="GO:0032259">
    <property type="term" value="P:methylation"/>
    <property type="evidence" value="ECO:0007669"/>
    <property type="project" value="UniProtKB-KW"/>
</dbReference>
<dbReference type="CDD" id="cd06445">
    <property type="entry name" value="ATase"/>
    <property type="match status" value="1"/>
</dbReference>
<dbReference type="FunFam" id="1.10.10.10:FF:000214">
    <property type="entry name" value="Methylated-DNA--protein-cysteine methyltransferase"/>
    <property type="match status" value="1"/>
</dbReference>
<dbReference type="Gene3D" id="1.10.10.10">
    <property type="entry name" value="Winged helix-like DNA-binding domain superfamily/Winged helix DNA-binding domain"/>
    <property type="match status" value="1"/>
</dbReference>
<dbReference type="InterPro" id="IPR001497">
    <property type="entry name" value="MethylDNA_cys_MeTrfase_AS"/>
</dbReference>
<dbReference type="InterPro" id="IPR014048">
    <property type="entry name" value="MethylDNA_cys_MeTrfase_DNA-bd"/>
</dbReference>
<dbReference type="InterPro" id="IPR036217">
    <property type="entry name" value="MethylDNA_cys_MeTrfase_DNAb"/>
</dbReference>
<dbReference type="InterPro" id="IPR036388">
    <property type="entry name" value="WH-like_DNA-bd_sf"/>
</dbReference>
<dbReference type="NCBIfam" id="TIGR00589">
    <property type="entry name" value="ogt"/>
    <property type="match status" value="1"/>
</dbReference>
<dbReference type="PANTHER" id="PTHR10815">
    <property type="entry name" value="METHYLATED-DNA--PROTEIN-CYSTEINE METHYLTRANSFERASE"/>
    <property type="match status" value="1"/>
</dbReference>
<dbReference type="PANTHER" id="PTHR10815:SF13">
    <property type="entry name" value="METHYLATED-DNA--PROTEIN-CYSTEINE METHYLTRANSFERASE"/>
    <property type="match status" value="1"/>
</dbReference>
<dbReference type="Pfam" id="PF01035">
    <property type="entry name" value="DNA_binding_1"/>
    <property type="match status" value="1"/>
</dbReference>
<dbReference type="SUPFAM" id="SSF46767">
    <property type="entry name" value="Methylated DNA-protein cysteine methyltransferase, C-terminal domain"/>
    <property type="match status" value="1"/>
</dbReference>
<dbReference type="PROSITE" id="PS00374">
    <property type="entry name" value="MGMT"/>
    <property type="match status" value="1"/>
</dbReference>
<evidence type="ECO:0000250" key="1"/>
<evidence type="ECO:0000255" key="2">
    <source>
        <dbReference type="PROSITE-ProRule" id="PRU10017"/>
    </source>
</evidence>
<evidence type="ECO:0000305" key="3"/>
<gene>
    <name type="primary">MGT1</name>
    <name type="ORF">LELG_05617</name>
</gene>
<feature type="chain" id="PRO_0000333686" description="Methylated-DNA--protein-cysteine methyltransferase">
    <location>
        <begin position="1"/>
        <end position="201"/>
    </location>
</feature>
<feature type="active site" description="Nucleophile; methyl group acceptor" evidence="2">
    <location>
        <position position="163"/>
    </location>
</feature>
<feature type="binding site" evidence="1">
    <location>
        <position position="131"/>
    </location>
    <ligand>
        <name>DNA</name>
        <dbReference type="ChEBI" id="CHEBI:16991"/>
    </ligand>
</feature>
<feature type="binding site" evidence="1">
    <location>
        <position position="132"/>
    </location>
    <ligand>
        <name>DNA</name>
        <dbReference type="ChEBI" id="CHEBI:16991"/>
    </ligand>
</feature>
<feature type="binding site" evidence="1">
    <location>
        <position position="146"/>
    </location>
    <ligand>
        <name>DNA</name>
        <dbReference type="ChEBI" id="CHEBI:16991"/>
    </ligand>
</feature>
<keyword id="KW-0227">DNA damage</keyword>
<keyword id="KW-0234">DNA repair</keyword>
<keyword id="KW-0238">DNA-binding</keyword>
<keyword id="KW-0489">Methyltransferase</keyword>
<keyword id="KW-0539">Nucleus</keyword>
<keyword id="KW-1185">Reference proteome</keyword>
<keyword id="KW-0808">Transferase</keyword>
<accession>A5E7M8</accession>
<name>MGMT_LODEL</name>
<organism>
    <name type="scientific">Lodderomyces elongisporus (strain ATCC 11503 / CBS 2605 / JCM 1781 / NBRC 1676 / NRRL YB-4239)</name>
    <name type="common">Yeast</name>
    <name type="synonym">Saccharomyces elongisporus</name>
    <dbReference type="NCBI Taxonomy" id="379508"/>
    <lineage>
        <taxon>Eukaryota</taxon>
        <taxon>Fungi</taxon>
        <taxon>Dikarya</taxon>
        <taxon>Ascomycota</taxon>
        <taxon>Saccharomycotina</taxon>
        <taxon>Pichiomycetes</taxon>
        <taxon>Debaryomycetaceae</taxon>
        <taxon>Candida/Lodderomyces clade</taxon>
        <taxon>Lodderomyces</taxon>
    </lineage>
</organism>
<reference key="1">
    <citation type="journal article" date="2009" name="Nature">
        <title>Evolution of pathogenicity and sexual reproduction in eight Candida genomes.</title>
        <authorList>
            <person name="Butler G."/>
            <person name="Rasmussen M.D."/>
            <person name="Lin M.F."/>
            <person name="Santos M.A.S."/>
            <person name="Sakthikumar S."/>
            <person name="Munro C.A."/>
            <person name="Rheinbay E."/>
            <person name="Grabherr M."/>
            <person name="Forche A."/>
            <person name="Reedy J.L."/>
            <person name="Agrafioti I."/>
            <person name="Arnaud M.B."/>
            <person name="Bates S."/>
            <person name="Brown A.J.P."/>
            <person name="Brunke S."/>
            <person name="Costanzo M.C."/>
            <person name="Fitzpatrick D.A."/>
            <person name="de Groot P.W.J."/>
            <person name="Harris D."/>
            <person name="Hoyer L.L."/>
            <person name="Hube B."/>
            <person name="Klis F.M."/>
            <person name="Kodira C."/>
            <person name="Lennard N."/>
            <person name="Logue M.E."/>
            <person name="Martin R."/>
            <person name="Neiman A.M."/>
            <person name="Nikolaou E."/>
            <person name="Quail M.A."/>
            <person name="Quinn J."/>
            <person name="Santos M.C."/>
            <person name="Schmitzberger F.F."/>
            <person name="Sherlock G."/>
            <person name="Shah P."/>
            <person name="Silverstein K.A.T."/>
            <person name="Skrzypek M.S."/>
            <person name="Soll D."/>
            <person name="Staggs R."/>
            <person name="Stansfield I."/>
            <person name="Stumpf M.P.H."/>
            <person name="Sudbery P.E."/>
            <person name="Srikantha T."/>
            <person name="Zeng Q."/>
            <person name="Berman J."/>
            <person name="Berriman M."/>
            <person name="Heitman J."/>
            <person name="Gow N.A.R."/>
            <person name="Lorenz M.C."/>
            <person name="Birren B.W."/>
            <person name="Kellis M."/>
            <person name="Cuomo C.A."/>
        </authorList>
    </citation>
    <scope>NUCLEOTIDE SEQUENCE [LARGE SCALE GENOMIC DNA]</scope>
    <source>
        <strain>ATCC 11503 / BCRC 21390 / CBS 2605 / JCM 1781 / NBRC 1676 / NRRL YB-4239</strain>
    </source>
</reference>